<evidence type="ECO:0000255" key="1">
    <source>
        <dbReference type="HAMAP-Rule" id="MF_00009"/>
    </source>
</evidence>
<dbReference type="EC" id="3.1.-.-" evidence="1"/>
<dbReference type="EMBL" id="CP000439">
    <property type="protein sequence ID" value="ABK89952.1"/>
    <property type="molecule type" value="Genomic_DNA"/>
</dbReference>
<dbReference type="RefSeq" id="WP_003039643.1">
    <property type="nucleotide sequence ID" value="NZ_CP009633.1"/>
</dbReference>
<dbReference type="SMR" id="A0Q6T7"/>
<dbReference type="KEGG" id="ftn:FTN_1065"/>
<dbReference type="KEGG" id="ftx:AW25_943"/>
<dbReference type="Proteomes" id="UP000000762">
    <property type="component" value="Chromosome"/>
</dbReference>
<dbReference type="GO" id="GO:0005737">
    <property type="term" value="C:cytoplasm"/>
    <property type="evidence" value="ECO:0007669"/>
    <property type="project" value="UniProtKB-SubCell"/>
</dbReference>
<dbReference type="GO" id="GO:0004222">
    <property type="term" value="F:metalloendopeptidase activity"/>
    <property type="evidence" value="ECO:0007669"/>
    <property type="project" value="InterPro"/>
</dbReference>
<dbReference type="GO" id="GO:0004521">
    <property type="term" value="F:RNA endonuclease activity"/>
    <property type="evidence" value="ECO:0007669"/>
    <property type="project" value="UniProtKB-UniRule"/>
</dbReference>
<dbReference type="GO" id="GO:0008270">
    <property type="term" value="F:zinc ion binding"/>
    <property type="evidence" value="ECO:0007669"/>
    <property type="project" value="UniProtKB-UniRule"/>
</dbReference>
<dbReference type="GO" id="GO:0006364">
    <property type="term" value="P:rRNA processing"/>
    <property type="evidence" value="ECO:0007669"/>
    <property type="project" value="UniProtKB-UniRule"/>
</dbReference>
<dbReference type="Gene3D" id="3.40.390.30">
    <property type="entry name" value="Metalloproteases ('zincins'), catalytic domain"/>
    <property type="match status" value="1"/>
</dbReference>
<dbReference type="HAMAP" id="MF_00009">
    <property type="entry name" value="Endoribonucl_YbeY"/>
    <property type="match status" value="1"/>
</dbReference>
<dbReference type="InterPro" id="IPR023091">
    <property type="entry name" value="MetalPrtase_cat_dom_sf_prd"/>
</dbReference>
<dbReference type="InterPro" id="IPR002036">
    <property type="entry name" value="YbeY"/>
</dbReference>
<dbReference type="InterPro" id="IPR020549">
    <property type="entry name" value="YbeY_CS"/>
</dbReference>
<dbReference type="NCBIfam" id="TIGR00043">
    <property type="entry name" value="rRNA maturation RNase YbeY"/>
    <property type="match status" value="1"/>
</dbReference>
<dbReference type="PANTHER" id="PTHR46986">
    <property type="entry name" value="ENDORIBONUCLEASE YBEY, CHLOROPLASTIC"/>
    <property type="match status" value="1"/>
</dbReference>
<dbReference type="PANTHER" id="PTHR46986:SF1">
    <property type="entry name" value="ENDORIBONUCLEASE YBEY, CHLOROPLASTIC"/>
    <property type="match status" value="1"/>
</dbReference>
<dbReference type="Pfam" id="PF02130">
    <property type="entry name" value="YbeY"/>
    <property type="match status" value="1"/>
</dbReference>
<dbReference type="SUPFAM" id="SSF55486">
    <property type="entry name" value="Metalloproteases ('zincins'), catalytic domain"/>
    <property type="match status" value="1"/>
</dbReference>
<dbReference type="PROSITE" id="PS01306">
    <property type="entry name" value="UPF0054"/>
    <property type="match status" value="1"/>
</dbReference>
<sequence>MDNLNINLINDDEHPIPSQDLLLKCLQLVADKHHISHAEVNLNIVSNDEIQQINKQFRNKDKPTNIISFEFEKPQGLPDDIANDFLGDIVIAPAVLENEAKEQNKELNDHWQHIFIHGLLHLLGYDHQDDQEAEVMENLEIQLLAQLGIANPYIEQENQNGR</sequence>
<protein>
    <recommendedName>
        <fullName evidence="1">Endoribonuclease YbeY</fullName>
        <ecNumber evidence="1">3.1.-.-</ecNumber>
    </recommendedName>
</protein>
<gene>
    <name evidence="1" type="primary">ybeY</name>
    <name type="ordered locus">FTN_1065</name>
</gene>
<accession>A0Q6T7</accession>
<keyword id="KW-0963">Cytoplasm</keyword>
<keyword id="KW-0255">Endonuclease</keyword>
<keyword id="KW-0378">Hydrolase</keyword>
<keyword id="KW-0479">Metal-binding</keyword>
<keyword id="KW-0540">Nuclease</keyword>
<keyword id="KW-0690">Ribosome biogenesis</keyword>
<keyword id="KW-0698">rRNA processing</keyword>
<keyword id="KW-0862">Zinc</keyword>
<reference key="1">
    <citation type="journal article" date="2007" name="Genome Biol.">
        <title>Comparison of Francisella tularensis genomes reveals evolutionary events associated with the emergence of human pathogenic strains.</title>
        <authorList>
            <person name="Rohmer L."/>
            <person name="Fong C."/>
            <person name="Abmayr S."/>
            <person name="Wasnick M."/>
            <person name="Larson Freeman T.J."/>
            <person name="Radey M."/>
            <person name="Guina T."/>
            <person name="Svensson K."/>
            <person name="Hayden H.S."/>
            <person name="Jacobs M."/>
            <person name="Gallagher L.A."/>
            <person name="Manoil C."/>
            <person name="Ernst R.K."/>
            <person name="Drees B."/>
            <person name="Buckley D."/>
            <person name="Haugen E."/>
            <person name="Bovee D."/>
            <person name="Zhou Y."/>
            <person name="Chang J."/>
            <person name="Levy R."/>
            <person name="Lim R."/>
            <person name="Gillett W."/>
            <person name="Guenthener D."/>
            <person name="Kang A."/>
            <person name="Shaffer S.A."/>
            <person name="Taylor G."/>
            <person name="Chen J."/>
            <person name="Gallis B."/>
            <person name="D'Argenio D.A."/>
            <person name="Forsman M."/>
            <person name="Olson M.V."/>
            <person name="Goodlett D.R."/>
            <person name="Kaul R."/>
            <person name="Miller S.I."/>
            <person name="Brittnacher M.J."/>
        </authorList>
    </citation>
    <scope>NUCLEOTIDE SEQUENCE [LARGE SCALE GENOMIC DNA]</scope>
    <source>
        <strain>U112</strain>
    </source>
</reference>
<comment type="function">
    <text evidence="1">Single strand-specific metallo-endoribonuclease involved in late-stage 70S ribosome quality control and in maturation of the 3' terminus of the 16S rRNA.</text>
</comment>
<comment type="cofactor">
    <cofactor evidence="1">
        <name>Zn(2+)</name>
        <dbReference type="ChEBI" id="CHEBI:29105"/>
    </cofactor>
    <text evidence="1">Binds 1 zinc ion.</text>
</comment>
<comment type="subcellular location">
    <subcellularLocation>
        <location evidence="1">Cytoplasm</location>
    </subcellularLocation>
</comment>
<comment type="similarity">
    <text evidence="1">Belongs to the endoribonuclease YbeY family.</text>
</comment>
<organism>
    <name type="scientific">Francisella tularensis subsp. novicida (strain U112)</name>
    <dbReference type="NCBI Taxonomy" id="401614"/>
    <lineage>
        <taxon>Bacteria</taxon>
        <taxon>Pseudomonadati</taxon>
        <taxon>Pseudomonadota</taxon>
        <taxon>Gammaproteobacteria</taxon>
        <taxon>Thiotrichales</taxon>
        <taxon>Francisellaceae</taxon>
        <taxon>Francisella</taxon>
    </lineage>
</organism>
<feature type="chain" id="PRO_0000284209" description="Endoribonuclease YbeY">
    <location>
        <begin position="1"/>
        <end position="162"/>
    </location>
</feature>
<feature type="binding site" evidence="1">
    <location>
        <position position="117"/>
    </location>
    <ligand>
        <name>Zn(2+)</name>
        <dbReference type="ChEBI" id="CHEBI:29105"/>
        <note>catalytic</note>
    </ligand>
</feature>
<feature type="binding site" evidence="1">
    <location>
        <position position="121"/>
    </location>
    <ligand>
        <name>Zn(2+)</name>
        <dbReference type="ChEBI" id="CHEBI:29105"/>
        <note>catalytic</note>
    </ligand>
</feature>
<feature type="binding site" evidence="1">
    <location>
        <position position="127"/>
    </location>
    <ligand>
        <name>Zn(2+)</name>
        <dbReference type="ChEBI" id="CHEBI:29105"/>
        <note>catalytic</note>
    </ligand>
</feature>
<name>YBEY_FRATN</name>
<proteinExistence type="inferred from homology"/>